<geneLocation type="mitochondrion"/>
<comment type="function">
    <text evidence="1">Core subunit of the mitochondrial membrane respiratory chain NADH dehydrogenase (Complex I) which catalyzes electron transfer from NADH through the respiratory chain, using ubiquinone as an electron acceptor. Essential for the catalytic activity of complex I.</text>
</comment>
<comment type="catalytic activity">
    <reaction evidence="1">
        <text>a ubiquinone + NADH + 5 H(+)(in) = a ubiquinol + NAD(+) + 4 H(+)(out)</text>
        <dbReference type="Rhea" id="RHEA:29091"/>
        <dbReference type="Rhea" id="RHEA-COMP:9565"/>
        <dbReference type="Rhea" id="RHEA-COMP:9566"/>
        <dbReference type="ChEBI" id="CHEBI:15378"/>
        <dbReference type="ChEBI" id="CHEBI:16389"/>
        <dbReference type="ChEBI" id="CHEBI:17976"/>
        <dbReference type="ChEBI" id="CHEBI:57540"/>
        <dbReference type="ChEBI" id="CHEBI:57945"/>
        <dbReference type="EC" id="7.1.1.2"/>
    </reaction>
</comment>
<comment type="subunit">
    <text evidence="1">Core subunit of respiratory chain NADH dehydrogenase (Complex I) which is composed of 45 different subunits. Interacts with TMEM186. Interacts with TMEM242 (By similarity).</text>
</comment>
<comment type="subcellular location">
    <subcellularLocation>
        <location evidence="2">Mitochondrion inner membrane</location>
        <topology evidence="3">Multi-pass membrane protein</topology>
    </subcellularLocation>
</comment>
<comment type="similarity">
    <text evidence="4">Belongs to the complex I subunit 3 family.</text>
</comment>
<feature type="chain" id="PRO_0000117769" description="NADH-ubiquinone oxidoreductase chain 3">
    <location>
        <begin position="1"/>
        <end position="115"/>
    </location>
</feature>
<feature type="transmembrane region" description="Helical" evidence="3">
    <location>
        <begin position="4"/>
        <end position="24"/>
    </location>
</feature>
<feature type="transmembrane region" description="Helical" evidence="3">
    <location>
        <begin position="55"/>
        <end position="75"/>
    </location>
</feature>
<feature type="transmembrane region" description="Helical" evidence="3">
    <location>
        <begin position="87"/>
        <end position="107"/>
    </location>
</feature>
<organism>
    <name type="scientific">Neotoma floridana</name>
    <name type="common">Eastern woodrat</name>
    <name type="synonym">Mus floridanus</name>
    <dbReference type="NCBI Taxonomy" id="42409"/>
    <lineage>
        <taxon>Eukaryota</taxon>
        <taxon>Metazoa</taxon>
        <taxon>Chordata</taxon>
        <taxon>Craniata</taxon>
        <taxon>Vertebrata</taxon>
        <taxon>Euteleostomi</taxon>
        <taxon>Mammalia</taxon>
        <taxon>Eutheria</taxon>
        <taxon>Euarchontoglires</taxon>
        <taxon>Glires</taxon>
        <taxon>Rodentia</taxon>
        <taxon>Myomorpha</taxon>
        <taxon>Muroidea</taxon>
        <taxon>Cricetidae</taxon>
        <taxon>Neotominae</taxon>
        <taxon>Neotoma</taxon>
    </lineage>
</organism>
<protein>
    <recommendedName>
        <fullName evidence="1">NADH-ubiquinone oxidoreductase chain 3</fullName>
        <ecNumber evidence="1">7.1.1.2</ecNumber>
    </recommendedName>
    <alternativeName>
        <fullName>NADH dehydrogenase subunit 3</fullName>
    </alternativeName>
</protein>
<name>NU3M_NEOFL</name>
<sequence>MNMLLAMLINITLSLLLISIAFWLPQLNIYTEKANPYDWGFDPMSSARLPFSMKFFLVAITFLLFDLEIALLLPIPWAIQIHSINTMMLTAFILVTILALGLAYEWIQKGLEWTE</sequence>
<evidence type="ECO:0000250" key="1">
    <source>
        <dbReference type="UniProtKB" id="P03897"/>
    </source>
</evidence>
<evidence type="ECO:0000250" key="2">
    <source>
        <dbReference type="UniProtKB" id="P03898"/>
    </source>
</evidence>
<evidence type="ECO:0000255" key="3"/>
<evidence type="ECO:0000305" key="4"/>
<accession>O21578</accession>
<reference key="1">
    <citation type="journal article" date="1998" name="Mol. Biol. Evol.">
        <title>Molecular systematics and paleobiogeography of the South American sigmodontine rodents.</title>
        <authorList>
            <person name="Engel S.R."/>
            <person name="Hogan K.M."/>
            <person name="Taylor J.F."/>
            <person name="Davis S.K."/>
        </authorList>
    </citation>
    <scope>NUCLEOTIDE SEQUENCE [GENOMIC DNA]</scope>
</reference>
<keyword id="KW-0249">Electron transport</keyword>
<keyword id="KW-0472">Membrane</keyword>
<keyword id="KW-0496">Mitochondrion</keyword>
<keyword id="KW-0999">Mitochondrion inner membrane</keyword>
<keyword id="KW-0520">NAD</keyword>
<keyword id="KW-0679">Respiratory chain</keyword>
<keyword id="KW-1278">Translocase</keyword>
<keyword id="KW-0812">Transmembrane</keyword>
<keyword id="KW-1133">Transmembrane helix</keyword>
<keyword id="KW-0813">Transport</keyword>
<keyword id="KW-0830">Ubiquinone</keyword>
<proteinExistence type="inferred from homology"/>
<gene>
    <name evidence="1" type="primary">MT-ND3</name>
    <name type="synonym">MTND3</name>
    <name type="synonym">NADH3</name>
    <name type="synonym">ND3</name>
</gene>
<dbReference type="EC" id="7.1.1.2" evidence="1"/>
<dbReference type="EMBL" id="U83827">
    <property type="protein sequence ID" value="AAB87193.1"/>
    <property type="molecule type" value="Genomic_DNA"/>
</dbReference>
<dbReference type="SMR" id="O21578"/>
<dbReference type="GO" id="GO:0005743">
    <property type="term" value="C:mitochondrial inner membrane"/>
    <property type="evidence" value="ECO:0000250"/>
    <property type="project" value="UniProtKB"/>
</dbReference>
<dbReference type="GO" id="GO:0030964">
    <property type="term" value="C:NADH dehydrogenase complex"/>
    <property type="evidence" value="ECO:0007669"/>
    <property type="project" value="TreeGrafter"/>
</dbReference>
<dbReference type="GO" id="GO:0008137">
    <property type="term" value="F:NADH dehydrogenase (ubiquinone) activity"/>
    <property type="evidence" value="ECO:0000250"/>
    <property type="project" value="UniProtKB"/>
</dbReference>
<dbReference type="GO" id="GO:0006120">
    <property type="term" value="P:mitochondrial electron transport, NADH to ubiquinone"/>
    <property type="evidence" value="ECO:0000250"/>
    <property type="project" value="UniProtKB"/>
</dbReference>
<dbReference type="FunFam" id="1.20.58.1610:FF:000004">
    <property type="entry name" value="NADH-quinone oxidoreductase subunit A"/>
    <property type="match status" value="1"/>
</dbReference>
<dbReference type="Gene3D" id="1.20.58.1610">
    <property type="entry name" value="NADH:ubiquinone/plastoquinone oxidoreductase, chain 3"/>
    <property type="match status" value="1"/>
</dbReference>
<dbReference type="InterPro" id="IPR000440">
    <property type="entry name" value="NADH_UbQ/plastoQ_OxRdtase_su3"/>
</dbReference>
<dbReference type="InterPro" id="IPR038430">
    <property type="entry name" value="NDAH_ubi_oxred_su3_sf"/>
</dbReference>
<dbReference type="PANTHER" id="PTHR11058">
    <property type="entry name" value="NADH-UBIQUINONE OXIDOREDUCTASE CHAIN 3"/>
    <property type="match status" value="1"/>
</dbReference>
<dbReference type="PANTHER" id="PTHR11058:SF9">
    <property type="entry name" value="NADH-UBIQUINONE OXIDOREDUCTASE CHAIN 3"/>
    <property type="match status" value="1"/>
</dbReference>
<dbReference type="Pfam" id="PF00507">
    <property type="entry name" value="Oxidored_q4"/>
    <property type="match status" value="1"/>
</dbReference>